<organism>
    <name type="scientific">Human adenovirus A serotype 12</name>
    <name type="common">HAdV-12</name>
    <name type="synonym">Human adenovirus 12</name>
    <dbReference type="NCBI Taxonomy" id="28282"/>
    <lineage>
        <taxon>Viruses</taxon>
        <taxon>Varidnaviria</taxon>
        <taxon>Bamfordvirae</taxon>
        <taxon>Preplasmiviricota</taxon>
        <taxon>Tectiliviricetes</taxon>
        <taxon>Rowavirales</taxon>
        <taxon>Adenoviridae</taxon>
        <taxon>Mastadenovirus</taxon>
        <taxon>Human mastadenovirus A</taxon>
    </lineage>
</organism>
<accession>P06538</accession>
<protein>
    <recommendedName>
        <fullName evidence="3">DNA polymerase</fullName>
        <ecNumber evidence="3">2.7.7.7</ecNumber>
    </recommendedName>
</protein>
<name>DPOL_ADE12</name>
<dbReference type="EC" id="2.7.7.7" evidence="3"/>
<dbReference type="EMBL" id="M14785">
    <property type="protein sequence ID" value="AAA42478.1"/>
    <property type="status" value="ALT_INIT"/>
    <property type="molecule type" value="Genomic_DNA"/>
</dbReference>
<dbReference type="EMBL" id="X73487">
    <property type="protein sequence ID" value="CAA51882.1"/>
    <property type="molecule type" value="Genomic_DNA"/>
</dbReference>
<dbReference type="PIR" id="S33933">
    <property type="entry name" value="DJAD12"/>
</dbReference>
<dbReference type="KEGG" id="vg:1460849"/>
<dbReference type="Proteomes" id="UP000004993">
    <property type="component" value="Genome"/>
</dbReference>
<dbReference type="GO" id="GO:0042025">
    <property type="term" value="C:host cell nucleus"/>
    <property type="evidence" value="ECO:0007669"/>
    <property type="project" value="UniProtKB-SubCell"/>
</dbReference>
<dbReference type="GO" id="GO:0008408">
    <property type="term" value="F:3'-5' exonuclease activity"/>
    <property type="evidence" value="ECO:0007669"/>
    <property type="project" value="UniProtKB-UniRule"/>
</dbReference>
<dbReference type="GO" id="GO:0003677">
    <property type="term" value="F:DNA binding"/>
    <property type="evidence" value="ECO:0007669"/>
    <property type="project" value="UniProtKB-UniRule"/>
</dbReference>
<dbReference type="GO" id="GO:0003887">
    <property type="term" value="F:DNA-directed DNA polymerase activity"/>
    <property type="evidence" value="ECO:0007669"/>
    <property type="project" value="UniProtKB-UniRule"/>
</dbReference>
<dbReference type="GO" id="GO:0000166">
    <property type="term" value="F:nucleotide binding"/>
    <property type="evidence" value="ECO:0007669"/>
    <property type="project" value="UniProtKB-UniRule"/>
</dbReference>
<dbReference type="GO" id="GO:0006261">
    <property type="term" value="P:DNA-templated DNA replication"/>
    <property type="evidence" value="ECO:0007669"/>
    <property type="project" value="UniProtKB-UniRule"/>
</dbReference>
<dbReference type="GO" id="GO:0039693">
    <property type="term" value="P:viral DNA genome replication"/>
    <property type="evidence" value="ECO:0007669"/>
    <property type="project" value="UniProtKB-UniRule"/>
</dbReference>
<dbReference type="Gene3D" id="1.10.287.690">
    <property type="entry name" value="Helix hairpin bin"/>
    <property type="match status" value="1"/>
</dbReference>
<dbReference type="Gene3D" id="3.90.1600.10">
    <property type="entry name" value="Palm domain of DNA polymerase"/>
    <property type="match status" value="1"/>
</dbReference>
<dbReference type="Gene3D" id="3.30.1770.10">
    <property type="entry name" value="TPR 1 domain of DNA polymerase"/>
    <property type="match status" value="1"/>
</dbReference>
<dbReference type="HAMAP" id="MF_04055">
    <property type="entry name" value="ADV_DPOL"/>
    <property type="match status" value="1"/>
</dbReference>
<dbReference type="InterPro" id="IPR006172">
    <property type="entry name" value="DNA-dir_DNA_pol_B"/>
</dbReference>
<dbReference type="InterPro" id="IPR014382">
    <property type="entry name" value="DNA-dir_DNA_pol_B_adenovir"/>
</dbReference>
<dbReference type="InterPro" id="IPR017964">
    <property type="entry name" value="DNA-dir_DNA_pol_B_CS"/>
</dbReference>
<dbReference type="InterPro" id="IPR004868">
    <property type="entry name" value="DNA-dir_DNA_pol_B_mt/vir"/>
</dbReference>
<dbReference type="InterPro" id="IPR043502">
    <property type="entry name" value="DNA/RNA_pol_sf"/>
</dbReference>
<dbReference type="InterPro" id="IPR023211">
    <property type="entry name" value="DNA_pol_palm_dom_sf"/>
</dbReference>
<dbReference type="InterPro" id="IPR012337">
    <property type="entry name" value="RNaseH-like_sf"/>
</dbReference>
<dbReference type="Pfam" id="PF03175">
    <property type="entry name" value="DNA_pol_B_2"/>
    <property type="match status" value="1"/>
</dbReference>
<dbReference type="PIRSF" id="PIRSF000788">
    <property type="entry name" value="DPol_ADV"/>
    <property type="match status" value="1"/>
</dbReference>
<dbReference type="PRINTS" id="PR00106">
    <property type="entry name" value="DNAPOLB"/>
</dbReference>
<dbReference type="SMART" id="SM00486">
    <property type="entry name" value="POLBc"/>
    <property type="match status" value="1"/>
</dbReference>
<dbReference type="SUPFAM" id="SSF56672">
    <property type="entry name" value="DNA/RNA polymerases"/>
    <property type="match status" value="1"/>
</dbReference>
<dbReference type="SUPFAM" id="SSF53098">
    <property type="entry name" value="Ribonuclease H-like"/>
    <property type="match status" value="1"/>
</dbReference>
<dbReference type="PROSITE" id="PS00116">
    <property type="entry name" value="DNA_POLYMERASE_B"/>
    <property type="match status" value="1"/>
</dbReference>
<evidence type="ECO:0000250" key="1">
    <source>
        <dbReference type="UniProtKB" id="P03261"/>
    </source>
</evidence>
<evidence type="ECO:0000250" key="2">
    <source>
        <dbReference type="UniProtKB" id="P04495"/>
    </source>
</evidence>
<evidence type="ECO:0000255" key="3">
    <source>
        <dbReference type="HAMAP-Rule" id="MF_04055"/>
    </source>
</evidence>
<evidence type="ECO:0000256" key="4">
    <source>
        <dbReference type="SAM" id="MobiDB-lite"/>
    </source>
</evidence>
<evidence type="ECO:0000305" key="5"/>
<reference key="1">
    <citation type="journal article" date="1986" name="Gene">
        <title>Nucleotide sequence of the genes encoded in early region 2b of human adenovirus type 12.</title>
        <authorList>
            <person name="Shu L."/>
            <person name="Hong J.S."/>
            <person name="Wei Y.-F."/>
            <person name="Engler J.A."/>
        </authorList>
    </citation>
    <scope>NUCLEOTIDE SEQUENCE [GENOMIC DNA]</scope>
</reference>
<reference key="2">
    <citation type="journal article" date="1994" name="J. Virol.">
        <title>Nucleotide sequence of human adenovirus type 12 DNA: comparative functional analysis.</title>
        <authorList>
            <person name="Sprengel J."/>
            <person name="Schmitz B."/>
            <person name="Heuss-Neitzel D."/>
            <person name="Zock C."/>
            <person name="Doerfler W."/>
        </authorList>
    </citation>
    <scope>NUCLEOTIDE SEQUENCE [LARGE SCALE GENOMIC DNA]</scope>
</reference>
<gene>
    <name evidence="3" type="primary">POL</name>
</gene>
<organismHost>
    <name type="scientific">Homo sapiens</name>
    <name type="common">Human</name>
    <dbReference type="NCBI Taxonomy" id="9606"/>
</organismHost>
<comment type="function">
    <text evidence="1 2 3">Eukaryotic-type DNA polymerase involved in viral genomic replication. DNA synthesis is protein primed, and acts in a strand displacement replication. Assembles in complex with viral pTP, DBP, host NFIA and host POU2F1/OCT1 on viral origin of replication. The polymerase covalently transfers dCMP onto pTP, thereby initiating complementary strand synthesis.</text>
</comment>
<comment type="catalytic activity">
    <reaction evidence="3">
        <text>DNA(n) + a 2'-deoxyribonucleoside 5'-triphosphate = DNA(n+1) + diphosphate</text>
        <dbReference type="Rhea" id="RHEA:22508"/>
        <dbReference type="Rhea" id="RHEA-COMP:17339"/>
        <dbReference type="Rhea" id="RHEA-COMP:17340"/>
        <dbReference type="ChEBI" id="CHEBI:33019"/>
        <dbReference type="ChEBI" id="CHEBI:61560"/>
        <dbReference type="ChEBI" id="CHEBI:173112"/>
        <dbReference type="EC" id="2.7.7.7"/>
    </reaction>
</comment>
<comment type="subunit">
    <text evidence="2 3">Heterodimer with the terminal protein; this heterodimer binds to bp 9 to 18 of the genome. Forms a complex with viral pTP, DBP and hosts NFIA and POU2F1/OCT1 for initiation of replication.</text>
</comment>
<comment type="subcellular location">
    <subcellularLocation>
        <location evidence="1 3">Host nucleus</location>
    </subcellularLocation>
</comment>
<comment type="miscellaneous">
    <text evidence="3">This DNA polymerase requires a protein as a primer.</text>
</comment>
<comment type="similarity">
    <text evidence="3 5">Belongs to the DNA polymerase type-B family.</text>
</comment>
<comment type="sequence caution" evidence="5">
    <conflict type="erroneous initiation">
        <sequence resource="EMBL-CDS" id="AAA42478"/>
    </conflict>
</comment>
<proteinExistence type="inferred from homology"/>
<feature type="chain" id="PRO_0000046496" description="DNA polymerase">
    <location>
        <begin position="1"/>
        <end position="1061"/>
    </location>
</feature>
<feature type="region of interest" description="Disordered" evidence="4">
    <location>
        <begin position="773"/>
        <end position="792"/>
    </location>
</feature>
<feature type="sequence conflict" description="In Ref. 1; AAA42478." evidence="5" ref="1">
    <original>R</original>
    <variation>S</variation>
    <location>
        <position position="32"/>
    </location>
</feature>
<feature type="sequence conflict" description="In Ref. 1; AAA42478." evidence="5" ref="1">
    <original>V</original>
    <variation>L</variation>
    <location>
        <position position="162"/>
    </location>
</feature>
<feature type="sequence conflict" description="In Ref. 1; AAA42478." evidence="5" ref="1">
    <original>LQ</original>
    <variation>YN</variation>
    <location>
        <begin position="181"/>
        <end position="182"/>
    </location>
</feature>
<feature type="sequence conflict" description="In Ref. 1; AAA42478." evidence="5" ref="1">
    <original>S</original>
    <variation>T</variation>
    <location>
        <position position="461"/>
    </location>
</feature>
<feature type="sequence conflict" description="In Ref. 1; AAA42478." evidence="5" ref="1">
    <original>L</original>
    <variation>F</variation>
    <location>
        <position position="575"/>
    </location>
</feature>
<feature type="sequence conflict" description="In Ref. 1; AAA42478." evidence="5" ref="1">
    <original>S</original>
    <variation>T</variation>
    <location>
        <position position="892"/>
    </location>
</feature>
<feature type="sequence conflict" description="In Ref. 1; AAA42478." evidence="5" ref="1">
    <original>K</original>
    <variation>M</variation>
    <location>
        <position position="1030"/>
    </location>
</feature>
<keyword id="KW-0235">DNA replication</keyword>
<keyword id="KW-0238">DNA-binding</keyword>
<keyword id="KW-0239">DNA-directed DNA polymerase</keyword>
<keyword id="KW-1048">Host nucleus</keyword>
<keyword id="KW-0548">Nucleotidyltransferase</keyword>
<keyword id="KW-1185">Reference proteome</keyword>
<keyword id="KW-0808">Transferase</keyword>
<keyword id="KW-1194">Viral DNA replication</keyword>
<sequence length="1061" mass="121728">MLFSLTDTMDSSRLYALISRFRPSRAEIWTCRSRGTVTLSVLAFEDPNGSGNAAEEEEDERQLPSGIDFPICFLVRGRQVHLIQQIQPVQRCEHCARFYKHQHECSVRRRDFYFHHINSHSSNWWQEIHFFPIGSHPRTERLFITYDVETYTWMGAFGKQLVPFMLVMKLSGDDNLVKHALQLALELGWDQWEKDSTTFYCLTPEKMKVGQQFRTYRNRLQTSLATDLWMTFLQKNPHLSQWAQEENGLVALEDLSYEDLKRAPAIKGEPRFVELYIVGHNINGFDEIVLAAQVINNRLDVPGPFKISRNFIPRAGKILFNDITFALPNPHYKKRTNFLLWEHGGCDDQDFKYQYLKVMVRDTFALTHTSLRKAAQAYALPVEKGCCPYKAVNQFYMLGSYRADANGFPLEEYWKDKEEYLLNQELWKKKGEKNYNLIGETLNYCALDVLVTASLVEKLRSSYAQFVTDAVGLDAAHFNVFQRPTISSNSHAIFRQILYRAEKPQRTHLGPNILAPSHELYDYVRASIRGGRCYPTYIGVLKEPIYVYDICGMYASALTHPMPWGPPLNPYERALAVRQWQVALENYTCKIDYFDKNLCPGIFTIDADPPDENQLDVLPPFCSRKGGRLAWTNESLRGEVVTSVDLVTLHNRGWRLRLLSDERTTIFPTWKCLAREYVQLNIAAKERADRDKNQTLRSIAKLLSNALYGSFATKLDNKKIVFSDQMEESLMKEIAAGRLNIKSSSFIETDTLSTEVMPAFERVYSPNQLALVNSEAEESDEDQGPAPFYSPPPENCEHVTYTYKPITFMDAEEGDMCLHTLESSNPLINNDRYPSHVASFVLAWTRAFVSEWSEFLYEEDRGIPLKDRPLKSVYGDTDSLFVTEKGRRLMESQGKKRIKKYGGKLVFDPSCPELTWSVECETVCSYCGADAYSPESVFLAPKLYALKCLQCPHCGSTSKGKIRAKGHATEALSYDLMLKCYLAEAQGEDTRFSTSRLSLKRTLASAQPGAHPFTVTETTLTRTLRPWKDKTLVHLDAHRLVPYSNSQPNPRNEEVCWIEMA</sequence>